<comment type="function">
    <text evidence="4 7 8 11 12 16">Catalyzes the conversion of ribonucleotides into deoxyribonucleotides, which are required for DNA synthesis and repair (PubMed:1460049, PubMed:24827372, PubMed:7568012, PubMed:7929317, PubMed:8381402, PubMed:9305874). Can reduce each of the four common ribonucleoside triphosphates (PubMed:7929317).</text>
</comment>
<comment type="catalytic activity">
    <reaction evidence="4 7 8 11 12 16">
        <text>a ribonucleoside 5'-triphosphate + formate + H(+) = a 2'-deoxyribonucleoside 5'-triphosphate + CO2 + H2O</text>
        <dbReference type="Rhea" id="RHEA:51476"/>
        <dbReference type="ChEBI" id="CHEBI:15377"/>
        <dbReference type="ChEBI" id="CHEBI:15378"/>
        <dbReference type="ChEBI" id="CHEBI:15740"/>
        <dbReference type="ChEBI" id="CHEBI:16526"/>
        <dbReference type="ChEBI" id="CHEBI:61557"/>
        <dbReference type="ChEBI" id="CHEBI:61560"/>
        <dbReference type="EC" id="1.1.98.6"/>
    </reaction>
</comment>
<comment type="catalytic activity">
    <reaction evidence="11">
        <text>formate + ATP + H(+) = dATP + CO2 + H2O</text>
        <dbReference type="Rhea" id="RHEA:51616"/>
        <dbReference type="ChEBI" id="CHEBI:15377"/>
        <dbReference type="ChEBI" id="CHEBI:15378"/>
        <dbReference type="ChEBI" id="CHEBI:15740"/>
        <dbReference type="ChEBI" id="CHEBI:16526"/>
        <dbReference type="ChEBI" id="CHEBI:30616"/>
        <dbReference type="ChEBI" id="CHEBI:61404"/>
    </reaction>
</comment>
<comment type="catalytic activity">
    <reaction evidence="7 8 11 16">
        <text>CTP + formate + H(+) = dCTP + CO2 + H2O</text>
        <dbReference type="Rhea" id="RHEA:51620"/>
        <dbReference type="ChEBI" id="CHEBI:15377"/>
        <dbReference type="ChEBI" id="CHEBI:15378"/>
        <dbReference type="ChEBI" id="CHEBI:15740"/>
        <dbReference type="ChEBI" id="CHEBI:16526"/>
        <dbReference type="ChEBI" id="CHEBI:37563"/>
        <dbReference type="ChEBI" id="CHEBI:61481"/>
    </reaction>
</comment>
<comment type="catalytic activity">
    <reaction evidence="11">
        <text>GTP + formate + H(+) = dGTP + CO2 + H2O</text>
        <dbReference type="Rhea" id="RHEA:51624"/>
        <dbReference type="ChEBI" id="CHEBI:15377"/>
        <dbReference type="ChEBI" id="CHEBI:15378"/>
        <dbReference type="ChEBI" id="CHEBI:15740"/>
        <dbReference type="ChEBI" id="CHEBI:16526"/>
        <dbReference type="ChEBI" id="CHEBI:37565"/>
        <dbReference type="ChEBI" id="CHEBI:61429"/>
    </reaction>
</comment>
<comment type="catalytic activity">
    <reaction evidence="11">
        <text>UTP + formate + H(+) = dUTP + CO2 + H2O</text>
        <dbReference type="Rhea" id="RHEA:51628"/>
        <dbReference type="ChEBI" id="CHEBI:15377"/>
        <dbReference type="ChEBI" id="CHEBI:15378"/>
        <dbReference type="ChEBI" id="CHEBI:15740"/>
        <dbReference type="ChEBI" id="CHEBI:16526"/>
        <dbReference type="ChEBI" id="CHEBI:46398"/>
        <dbReference type="ChEBI" id="CHEBI:61555"/>
    </reaction>
</comment>
<comment type="activity regulation">
    <text evidence="4 5 9 10 11 13 15 16">Activated under anaerobic conditions by NrdG, a tightly associated activase (PubMed:1460049, PubMed:7852304, PubMed:9305874). Activation involves the formation of a glycyl radical at Gly-681 (PubMed:7852304, PubMed:8636106, PubMed:9305874). Exposure of the activated reductase to oxygen leads to C-terminal truncation and inactivation of the protein, by cleavage at the N-terminal side of Gly-681 (PubMed:7826394, PubMed:8421692). The presence of zinc protects the protein from proteolysis and prevents the formation of disulfide bridges within it (PubMed:19381696). The enzyme shows a basal activity in the absence of any effector, but reduction is stimulated up to 10-fold by an appropriate modulator (dGTP for ATP reduction, ATP for CTP and UTP reduction, and dTTP for GTP reduction) (PubMed:7929317). dGTP and dTTP inhibit the reduction of the incorrect substrate, and dATP inhibits reduction of all four (PubMed:7929317). These modulators act as allosteric effectors (PubMed:7929317).</text>
</comment>
<comment type="biophysicochemical properties">
    <kinetics>
        <KM evidence="11">4 mM for ATP (in the presence of 0.2 mM dGTP)</KM>
        <KM evidence="4">0.35 mM for CTP</KM>
        <KM evidence="11">0.5 mM for CTP (in the presence of 0.4 mM ATP)</KM>
        <KM evidence="11">0.4 mM for GTP (in the presence of 0.8 mM dTTP)</KM>
        <KM evidence="11">1.6 mM for UTP (in the presence of 0.4 mM ATP)</KM>
    </kinetics>
</comment>
<comment type="subunit">
    <text evidence="4 14 16">Homodimer (PubMed:1460049, PubMed:8621608). Forms a tetramer composed of two NrdD and two NrdG subunits (PubMed:8621608, PubMed:9305874).</text>
</comment>
<comment type="interaction">
    <interactant intactId="EBI-370011">
        <id>P28903</id>
    </interactant>
    <interactant intactId="EBI-1135026">
        <id>P0A9N8</id>
        <label>nrdG</label>
    </interactant>
    <organismsDiffer>false</organismsDiffer>
    <experiments>3</experiments>
</comment>
<comment type="induction">
    <text evidence="6">Induced 2-fold by hydroxyurea.</text>
</comment>
<comment type="domain">
    <text evidence="11">Modulators bind to two classes of sites, one that binds ATP and dATP and regulates pyrimidine ribonucleotide reduction ('pyrimidine site'), the other that binds dATP, dGTP, and dTTP and regulates purine ribonucleotide reduction ('purine site').</text>
</comment>
<comment type="miscellaneous">
    <text evidence="7">The glycyl radical is involved in generation of a transient thiyl (sulfanyl) radical on a cysteine residue, which attacks the substrate, forming a ribonucleotide 3'-radical, followed by water loss to form a ketyl (alpha-oxoalkyl) radical. The ketyl radical gains an electron from a cysteine residue and a proton from formic acid, forming 3'-keto-deoxyribonucleotide and generating a thiosulfuranyl radical bridge between methionine and cysteine residues. Oxidation of formate by the thiosulfuranyl radical results in the release of CO(2) and regeneration of the thiyl radical.</text>
</comment>
<comment type="similarity">
    <text evidence="19">Belongs to the anaerobic ribonucleoside-triphosphate reductase family.</text>
</comment>
<comment type="caution">
    <text evidence="14 17">Was originally thought to contain an iron sulfur cluster (PubMed:8381402). It was shown later that only NrdG contains an iron sulfur center (PubMed:8621608).</text>
</comment>
<name>NRDD_ECOLI</name>
<proteinExistence type="evidence at protein level"/>
<reference key="1">
    <citation type="journal article" date="1993" name="Proc. Natl. Acad. Sci. U.S.A.">
        <title>A possible glycine radical in anaerobic ribonucleotide reductase from Escherichia coli: nucleotide sequence of the cloned nrdD gene.</title>
        <authorList>
            <person name="Sun X."/>
            <person name="Harder J."/>
            <person name="Krook M."/>
            <person name="Joernvall H."/>
            <person name="Sjoeberg B.-M."/>
            <person name="Reichard P."/>
        </authorList>
    </citation>
    <scope>NUCLEOTIDE SEQUENCE [GENOMIC DNA]</scope>
    <scope>PARTIAL PROTEIN SEQUENCE</scope>
    <scope>ACTIVITY REGULATION</scope>
    <source>
        <strain>K12 / W3110 / ATCC 27325 / DSM 5911</strain>
    </source>
</reference>
<reference key="2">
    <citation type="journal article" date="1995" name="Nucleic Acids Res.">
        <title>Analysis of the Escherichia coli genome VI: DNA sequence of the region from 92.8 through 100 minutes.</title>
        <authorList>
            <person name="Burland V.D."/>
            <person name="Plunkett G. III"/>
            <person name="Sofia H.J."/>
            <person name="Daniels D.L."/>
            <person name="Blattner F.R."/>
        </authorList>
    </citation>
    <scope>NUCLEOTIDE SEQUENCE [LARGE SCALE GENOMIC DNA]</scope>
    <source>
        <strain>K12 / MG1655 / ATCC 47076</strain>
    </source>
</reference>
<reference key="3">
    <citation type="journal article" date="1997" name="Science">
        <title>The complete genome sequence of Escherichia coli K-12.</title>
        <authorList>
            <person name="Blattner F.R."/>
            <person name="Plunkett G. III"/>
            <person name="Bloch C.A."/>
            <person name="Perna N.T."/>
            <person name="Burland V."/>
            <person name="Riley M."/>
            <person name="Collado-Vides J."/>
            <person name="Glasner J.D."/>
            <person name="Rode C.K."/>
            <person name="Mayhew G.F."/>
            <person name="Gregor J."/>
            <person name="Davis N.W."/>
            <person name="Kirkpatrick H.A."/>
            <person name="Goeden M.A."/>
            <person name="Rose D.J."/>
            <person name="Mau B."/>
            <person name="Shao Y."/>
        </authorList>
    </citation>
    <scope>NUCLEOTIDE SEQUENCE [LARGE SCALE GENOMIC DNA]</scope>
    <source>
        <strain>K12 / MG1655 / ATCC 47076</strain>
    </source>
</reference>
<reference key="4">
    <citation type="journal article" date="2006" name="Mol. Syst. Biol.">
        <title>Highly accurate genome sequences of Escherichia coli K-12 strains MG1655 and W3110.</title>
        <authorList>
            <person name="Hayashi K."/>
            <person name="Morooka N."/>
            <person name="Yamamoto Y."/>
            <person name="Fujita K."/>
            <person name="Isono K."/>
            <person name="Choi S."/>
            <person name="Ohtsubo E."/>
            <person name="Baba T."/>
            <person name="Wanner B.L."/>
            <person name="Mori H."/>
            <person name="Horiuchi T."/>
        </authorList>
    </citation>
    <scope>NUCLEOTIDE SEQUENCE [LARGE SCALE GENOMIC DNA]</scope>
    <source>
        <strain>K12 / W3110 / ATCC 27325 / DSM 5911</strain>
    </source>
</reference>
<reference key="5">
    <citation type="journal article" date="1994" name="J. Bacteriol.">
        <title>Trehalose-6-phosphate hydrolase of Escherichia coli.</title>
        <authorList>
            <person name="Rimmele M."/>
            <person name="Boos W."/>
        </authorList>
    </citation>
    <scope>NUCLEOTIDE SEQUENCE [GENOMIC DNA] OF 1-229</scope>
    <source>
        <strain>K12</strain>
    </source>
</reference>
<reference key="6">
    <citation type="journal article" date="1995" name="J. Biol. Chem.">
        <title>Generation of the glycyl radical of the anaerobic Escherichia coli ribonucleotide reductase requires a specific activating enzyme.</title>
        <authorList>
            <person name="Sun X."/>
            <person name="Eliasson R."/>
            <person name="Pontis E."/>
            <person name="Andersson J."/>
            <person name="Buist G."/>
            <person name="Sjoeberg B.-M."/>
            <person name="Reichard P."/>
        </authorList>
    </citation>
    <scope>NUCLEOTIDE SEQUENCE [GENOMIC DNA] OF 703-712</scope>
    <scope>ACTIVITY REGULATION</scope>
    <source>
        <strain>K12</strain>
    </source>
</reference>
<reference key="7">
    <citation type="journal article" date="1992" name="J. Biol. Chem.">
        <title>Characterization of components of the anaerobic ribonucleotide reductase system from Escherichia coli.</title>
        <authorList>
            <person name="Eliasson R."/>
            <person name="Pontis E."/>
            <person name="Fontecave M."/>
            <person name="Gerez C."/>
            <person name="Harder J."/>
            <person name="Joernvall H."/>
            <person name="Krook M."/>
            <person name="Reichard P."/>
        </authorList>
    </citation>
    <scope>PROTEIN SEQUENCE OF 1-15</scope>
    <scope>FUNCTION</scope>
    <scope>CATALYTIC ACTIVITY</scope>
    <scope>ACTIVITY REGULATION</scope>
    <scope>BIOPHYSICOCHEMICAL PROPERTIES</scope>
    <scope>SUBUNIT</scope>
</reference>
<reference key="8">
    <citation type="journal article" date="1993" name="J. Biol. Chem.">
        <title>An iron-sulfur center and a free radical in the active anaerobic ribonucleotide reductase of Escherichia coli.</title>
        <authorList>
            <person name="Mulliez E."/>
            <person name="Fontecave M."/>
            <person name="Gaillard J."/>
            <person name="Reichard P."/>
        </authorList>
    </citation>
    <scope>FUNCTION</scope>
    <scope>CATALYTIC ACTIVITY</scope>
</reference>
<reference key="9">
    <citation type="journal article" date="1994" name="J. Biol. Chem.">
        <title>Allosteric control of the substrate specificity of the anaerobic ribonucleotide reductase from Escherichia coli.</title>
        <authorList>
            <person name="Eliasson R."/>
            <person name="Pontis E."/>
            <person name="Sun X."/>
            <person name="Reichard P."/>
        </authorList>
    </citation>
    <scope>FUNCTION</scope>
    <scope>CATALYTIC ACTIVITY</scope>
    <scope>ACTIVITY REGULATION</scope>
    <scope>DOMAIN</scope>
</reference>
<reference key="10">
    <citation type="journal article" date="1995" name="Biochem. Biophys. Res. Commun.">
        <title>Mass spectrometric determination of the radical scission site in the anaerobic ribonucleotide reductase of Escherichia coli.</title>
        <authorList>
            <person name="King D.S."/>
            <person name="Reichard P."/>
        </authorList>
    </citation>
    <scope>ACTIVITY REGULATION</scope>
    <scope>GLYCYL RADICAL AT GLY-681</scope>
</reference>
<reference key="11">
    <citation type="journal article" date="1995" name="Proc. Natl. Acad. Sci. U.S.A.">
        <title>Formate is the hydrogen donor for the anaerobic ribonucleotide reductase from Escherichia coli.</title>
        <authorList>
            <person name="Mulliez E."/>
            <person name="Ollagnier S."/>
            <person name="Fontecave M."/>
            <person name="Eliasson R."/>
            <person name="Reichard P."/>
        </authorList>
    </citation>
    <scope>FUNCTION</scope>
    <scope>CATALYTIC ACTIVITY</scope>
</reference>
<reference key="12">
    <citation type="journal article" date="1996" name="J. Biol. Chem.">
        <title>The free radical of the anaerobic ribonucleotide reductase from Escherichia coli is at glycine 681.</title>
        <authorList>
            <person name="Sun X."/>
            <person name="Ollagnier S."/>
            <person name="Schmidt P.P."/>
            <person name="Atta M."/>
            <person name="Mulliez E."/>
            <person name="Lepape L."/>
            <person name="Eliasson R."/>
            <person name="Graeslund A."/>
            <person name="Fontecave M."/>
            <person name="Reichard P."/>
            <person name="Sjoeberg B.M."/>
        </authorList>
    </citation>
    <scope>ACTIVITY REGULATION</scope>
    <scope>GLYCYL RADICAL AT GLY-681</scope>
    <scope>MUTAGENESIS OF CYS-680; GLY-681 AND TYR-682</scope>
</reference>
<reference key="13">
    <citation type="journal article" date="1996" name="J. Biol. Chem.">
        <title>The anaerobic Escherichia coli ribonucleotide reductase. Subunit structure and iron sulfur center.</title>
        <authorList>
            <person name="Ollagnier S."/>
            <person name="Mulliez E."/>
            <person name="Gaillard J."/>
            <person name="Eliasson R."/>
            <person name="Fontecave M."/>
            <person name="Reichard P."/>
        </authorList>
    </citation>
    <scope>SUBUNIT</scope>
    <scope>INTERACTION WITH NRDG</scope>
</reference>
<reference key="14">
    <citation type="journal article" date="1997" name="J. Biol. Chem.">
        <title>Activation of the anaerobic ribonucleotide reductase from Escherichia coli. The essential role of the iron-sulfur center for S-adenosylmethionine reduction.</title>
        <authorList>
            <person name="Ollagnier S."/>
            <person name="Mulliez E."/>
            <person name="Schmidt P.P."/>
            <person name="Eliasson R."/>
            <person name="Gaillard J."/>
            <person name="Deronzier C."/>
            <person name="Bergman T."/>
            <person name="Graeslund A."/>
            <person name="Reichard P."/>
            <person name="Fontecave M."/>
        </authorList>
    </citation>
    <scope>FUNCTION</scope>
    <scope>CATALYTIC ACTIVITY</scope>
    <scope>ACTIVITY REGULATION</scope>
    <scope>SUBUNIT</scope>
</reference>
<reference key="15">
    <citation type="journal article" date="2003" name="Proc. Natl. Acad. Sci. U.S.A.">
        <title>A metal-binding site in the catalytic subunit of anaerobic ribonucleotide reductase.</title>
        <authorList>
            <person name="Logan D.T."/>
            <person name="Mulliez E."/>
            <person name="Larsson K.-M."/>
            <person name="Bodevin S."/>
            <person name="Atta M."/>
            <person name="Garnaud P.E."/>
            <person name="Sjoeberg B.-M."/>
            <person name="Fontecave M."/>
        </authorList>
    </citation>
    <scope>ZINC-BINDING</scope>
    <scope>MUTAGENESIS OF CYS-644; CYS-647; CYS-662 AND CYS-665</scope>
</reference>
<reference key="16">
    <citation type="journal article" date="2009" name="J. Biol. Inorg. Chem.">
        <title>The Zn center of the anaerobic ribonucleotide reductase from E. coli.</title>
        <authorList>
            <person name="Luttringer F."/>
            <person name="Mulliez E."/>
            <person name="Dublet B."/>
            <person name="Lemaire D."/>
            <person name="Fontecave M."/>
        </authorList>
    </citation>
    <scope>ZINC-BINDING</scope>
    <scope>ACTIVITY REGULATION</scope>
</reference>
<reference key="17">
    <citation type="journal article" date="2009" name="Mol. Cell">
        <title>Hydroxyurea induces hydroxyl radical-mediated cell death in Escherichia coli.</title>
        <authorList>
            <person name="Davies B.W."/>
            <person name="Kohanski M.A."/>
            <person name="Simmons L.A."/>
            <person name="Winkler J.A."/>
            <person name="Collins J.J."/>
            <person name="Walker G.C."/>
        </authorList>
    </citation>
    <scope>INDUCTION BY HYDROXYUREA</scope>
    <source>
        <strain>K12 / MC4100 / ATCC 35695 / DSM 6574</strain>
    </source>
</reference>
<reference key="18">
    <citation type="journal article" date="2014" name="J. Am. Chem. Soc.">
        <title>A chemically competent thiosulfuranyl radical on the Escherichia coli class III ribonucleotide reductase.</title>
        <authorList>
            <person name="Wei Y."/>
            <person name="Mathies G."/>
            <person name="Yokoyama K."/>
            <person name="Chen J."/>
            <person name="Griffin R.G."/>
            <person name="Stubbe J."/>
        </authorList>
    </citation>
    <scope>FUNCTION</scope>
    <scope>CATALYTIC ACTIVITY</scope>
    <scope>REACTION MECHANISM</scope>
</reference>
<keyword id="KW-0021">Allosteric enzyme</keyword>
<keyword id="KW-0067">ATP-binding</keyword>
<keyword id="KW-0903">Direct protein sequencing</keyword>
<keyword id="KW-0479">Metal-binding</keyword>
<keyword id="KW-0547">Nucleotide-binding</keyword>
<keyword id="KW-0556">Organic radical</keyword>
<keyword id="KW-0560">Oxidoreductase</keyword>
<keyword id="KW-1185">Reference proteome</keyword>
<keyword id="KW-0862">Zinc</keyword>
<accession>P28903</accession>
<accession>Q2M669</accession>
<sequence length="712" mass="80023">MTPHVMKRDGCKVPFKSERIKEAILRAAKAAEVDDADYCATVAAVVSEQMQGRNQVDINEIQTAVENQLMSGPYKQLARAYIEYRHDRDIEREKRGRLNQEIRGLVEQTNASLLNENANKDSKVIPTQRDLLAGIVAKHYARQHLLPRDVVQAHERGDIHYHDLDYSPFFPMFNCMLIDLKGMLTQGFKMGNAEIEPPKSISTATAVTAQIIAQVASHIYGGTTINRIDEVLAPFVTASYNKHRKTAEEWNIPDAEGYANSRTIKECYDAFQSLEYEVNTLHTANGQTPFVTFGFGLGTSWESRLIQESILRNRIAGLGKNRKTAVFPKLVFAIRDGLNHKKGDPNYDIKQLALECASKRMYPDILNYDQVVKVTGSFKTPMGCRSFLGVWENENGEQIHDGRNNLGVISLNLPRIALEAKGDEATFWKLLDERLVLARKALMTRIARLEGVKARVAPILYMEGACGVRLNADDDVSEIFKNGRASISLGYIGIHETINALFGGEHVYDNEQLRAKGIAIVERLRQAVDQWKEETGYGFSLYSTPSENLCDRFCRLDTAEFGVVPGVTDKGYYTNSFHLDVEKKVNPYDKIDFEAPYPPLANGGFICYGEYPNIQHNLKALEDVWDYSYQHVPYYGTNTPIDECYECGFTGEFECTSKGFTCPKCGNHDASRVSVTRRVCGYLGSPDARPFNAGKQEEVKRRVKHLGNGQIG</sequence>
<feature type="chain" id="PRO_0000166683" description="Anaerobic ribonucleoside-triphosphate reductase">
    <location>
        <begin position="1"/>
        <end position="712"/>
    </location>
</feature>
<feature type="domain" description="ATP-cone" evidence="1">
    <location>
        <begin position="3"/>
        <end position="92"/>
    </location>
</feature>
<feature type="domain" description="Glycine radical" evidence="2">
    <location>
        <begin position="583"/>
        <end position="708"/>
    </location>
</feature>
<feature type="binding site" evidence="20 21">
    <location>
        <position position="644"/>
    </location>
    <ligand>
        <name>Zn(2+)</name>
        <dbReference type="ChEBI" id="CHEBI:29105"/>
    </ligand>
</feature>
<feature type="binding site" evidence="20 21">
    <location>
        <position position="647"/>
    </location>
    <ligand>
        <name>Zn(2+)</name>
        <dbReference type="ChEBI" id="CHEBI:29105"/>
    </ligand>
</feature>
<feature type="binding site" evidence="20 21">
    <location>
        <position position="662"/>
    </location>
    <ligand>
        <name>Zn(2+)</name>
        <dbReference type="ChEBI" id="CHEBI:29105"/>
    </ligand>
</feature>
<feature type="binding site" evidence="20 21">
    <location>
        <position position="665"/>
    </location>
    <ligand>
        <name>Zn(2+)</name>
        <dbReference type="ChEBI" id="CHEBI:29105"/>
    </ligand>
</feature>
<feature type="modified residue" description="Glycine radical" evidence="2 9 15">
    <location>
        <position position="681"/>
    </location>
</feature>
<feature type="mutagenesis site" description="Loss of activity." evidence="3">
    <original>C</original>
    <variation>A</variation>
    <location>
        <position position="644"/>
    </location>
</feature>
<feature type="mutagenesis site" description="Almost loss of activity." evidence="3">
    <original>C</original>
    <variation>A</variation>
    <location>
        <position position="647"/>
    </location>
</feature>
<feature type="mutagenesis site" description="Loss of activity." evidence="3">
    <original>C</original>
    <variation>A</variation>
    <location>
        <position position="662"/>
    </location>
</feature>
<feature type="mutagenesis site" description="Loss of activity." evidence="3">
    <original>C</original>
    <variation>A</variation>
    <location>
        <position position="665"/>
    </location>
</feature>
<feature type="mutagenesis site" description="Still retains some radical and some enzyme activity." evidence="15">
    <original>C</original>
    <variation>S</variation>
    <location>
        <position position="680"/>
    </location>
</feature>
<feature type="mutagenesis site" description="Lacks both radical and enzyme activity." evidence="15">
    <original>G</original>
    <variation>A</variation>
    <location>
        <position position="681"/>
    </location>
</feature>
<feature type="mutagenesis site" description="Still retains some radical and some enzyme activity." evidence="15">
    <original>Y</original>
    <variation>F</variation>
    <location>
        <position position="682"/>
    </location>
</feature>
<feature type="sequence conflict" description="In Ref. 1; AAA24226." evidence="19" ref="1">
    <original>G</original>
    <variation>R</variation>
    <location>
        <position position="257"/>
    </location>
</feature>
<feature type="sequence conflict" description="In Ref. 1; AAA24226." evidence="19" ref="1">
    <original>A</original>
    <variation>P</variation>
    <location>
        <position position="420"/>
    </location>
</feature>
<gene>
    <name evidence="18" type="primary">nrdD</name>
    <name type="ordered locus">b4238</name>
    <name type="ordered locus">JW4197</name>
</gene>
<protein>
    <recommendedName>
        <fullName evidence="19">Anaerobic ribonucleoside-triphosphate reductase</fullName>
        <ecNumber evidence="4 7 8 11 12 16">1.1.98.6</ecNumber>
    </recommendedName>
    <alternativeName>
        <fullName evidence="19">Class III ribonucleoside-triphosphate reductase</fullName>
    </alternativeName>
</protein>
<evidence type="ECO:0000255" key="1">
    <source>
        <dbReference type="PROSITE-ProRule" id="PRU00492"/>
    </source>
</evidence>
<evidence type="ECO:0000255" key="2">
    <source>
        <dbReference type="PROSITE-ProRule" id="PRU00493"/>
    </source>
</evidence>
<evidence type="ECO:0000269" key="3">
    <source>
    </source>
</evidence>
<evidence type="ECO:0000269" key="4">
    <source>
    </source>
</evidence>
<evidence type="ECO:0000269" key="5">
    <source>
    </source>
</evidence>
<evidence type="ECO:0000269" key="6">
    <source>
    </source>
</evidence>
<evidence type="ECO:0000269" key="7">
    <source>
    </source>
</evidence>
<evidence type="ECO:0000269" key="8">
    <source>
    </source>
</evidence>
<evidence type="ECO:0000269" key="9">
    <source>
    </source>
</evidence>
<evidence type="ECO:0000269" key="10">
    <source>
    </source>
</evidence>
<evidence type="ECO:0000269" key="11">
    <source>
    </source>
</evidence>
<evidence type="ECO:0000269" key="12">
    <source>
    </source>
</evidence>
<evidence type="ECO:0000269" key="13">
    <source>
    </source>
</evidence>
<evidence type="ECO:0000269" key="14">
    <source>
    </source>
</evidence>
<evidence type="ECO:0000269" key="15">
    <source>
    </source>
</evidence>
<evidence type="ECO:0000269" key="16">
    <source>
    </source>
</evidence>
<evidence type="ECO:0000303" key="17">
    <source>
    </source>
</evidence>
<evidence type="ECO:0000303" key="18">
    <source>
    </source>
</evidence>
<evidence type="ECO:0000305" key="19"/>
<evidence type="ECO:0000305" key="20">
    <source>
    </source>
</evidence>
<evidence type="ECO:0000305" key="21">
    <source>
    </source>
</evidence>
<organism>
    <name type="scientific">Escherichia coli (strain K12)</name>
    <dbReference type="NCBI Taxonomy" id="83333"/>
    <lineage>
        <taxon>Bacteria</taxon>
        <taxon>Pseudomonadati</taxon>
        <taxon>Pseudomonadota</taxon>
        <taxon>Gammaproteobacteria</taxon>
        <taxon>Enterobacterales</taxon>
        <taxon>Enterobacteriaceae</taxon>
        <taxon>Escherichia</taxon>
    </lineage>
</organism>
<dbReference type="EC" id="1.1.98.6" evidence="4 7 8 11 12 16"/>
<dbReference type="EMBL" id="L06097">
    <property type="protein sequence ID" value="AAA24226.1"/>
    <property type="molecule type" value="Genomic_DNA"/>
</dbReference>
<dbReference type="EMBL" id="U14003">
    <property type="protein sequence ID" value="AAA97135.1"/>
    <property type="molecule type" value="Genomic_DNA"/>
</dbReference>
<dbReference type="EMBL" id="U00096">
    <property type="protein sequence ID" value="AAC77195.1"/>
    <property type="molecule type" value="Genomic_DNA"/>
</dbReference>
<dbReference type="EMBL" id="AP009048">
    <property type="protein sequence ID" value="BAE78237.1"/>
    <property type="molecule type" value="Genomic_DNA"/>
</dbReference>
<dbReference type="EMBL" id="U06195">
    <property type="protein sequence ID" value="AAC43383.1"/>
    <property type="molecule type" value="Genomic_DNA"/>
</dbReference>
<dbReference type="EMBL" id="Z46865">
    <property type="protein sequence ID" value="CAA86938.1"/>
    <property type="molecule type" value="Genomic_DNA"/>
</dbReference>
<dbReference type="PIR" id="A47331">
    <property type="entry name" value="A47331"/>
</dbReference>
<dbReference type="RefSeq" id="NP_418659.1">
    <property type="nucleotide sequence ID" value="NC_000913.3"/>
</dbReference>
<dbReference type="RefSeq" id="WP_000187778.1">
    <property type="nucleotide sequence ID" value="NZ_LN832404.1"/>
</dbReference>
<dbReference type="SMR" id="P28903"/>
<dbReference type="BioGRID" id="4259318">
    <property type="interactions" value="30"/>
</dbReference>
<dbReference type="BioGRID" id="853044">
    <property type="interactions" value="4"/>
</dbReference>
<dbReference type="ComplexPortal" id="CPX-3821">
    <property type="entry name" value="nrdDG class III anaerobic ribonucleotide reductase activation complex"/>
</dbReference>
<dbReference type="ComplexPortal" id="CPX-3822">
    <property type="entry name" value="nrdD class III anaerobic ribonucleotide reductase complex"/>
</dbReference>
<dbReference type="DIP" id="DIP-10358N"/>
<dbReference type="FunCoup" id="P28903">
    <property type="interactions" value="229"/>
</dbReference>
<dbReference type="IntAct" id="P28903">
    <property type="interactions" value="9"/>
</dbReference>
<dbReference type="STRING" id="511145.b4238"/>
<dbReference type="jPOST" id="P28903"/>
<dbReference type="PaxDb" id="511145-b4238"/>
<dbReference type="EnsemblBacteria" id="AAC77195">
    <property type="protein sequence ID" value="AAC77195"/>
    <property type="gene ID" value="b4238"/>
</dbReference>
<dbReference type="GeneID" id="948755"/>
<dbReference type="KEGG" id="ecj:JW4197"/>
<dbReference type="KEGG" id="eco:b4238"/>
<dbReference type="KEGG" id="ecoc:C3026_22875"/>
<dbReference type="PATRIC" id="fig|1411691.4.peg.2464"/>
<dbReference type="EchoBASE" id="EB1388"/>
<dbReference type="eggNOG" id="COG1328">
    <property type="taxonomic scope" value="Bacteria"/>
</dbReference>
<dbReference type="HOGENOM" id="CLU_002707_2_0_6"/>
<dbReference type="InParanoid" id="P28903"/>
<dbReference type="OMA" id="HDLDYTP"/>
<dbReference type="OrthoDB" id="9804622at2"/>
<dbReference type="PhylomeDB" id="P28903"/>
<dbReference type="BioCyc" id="EcoCyc:RIBONUCLEOSIDE-TRIP-REDUCT-MONOMER"/>
<dbReference type="BioCyc" id="MetaCyc:RIBONUCLEOSIDE-TRIP-REDUCT-MONOMER"/>
<dbReference type="BRENDA" id="1.1.98.6">
    <property type="organism ID" value="2026"/>
</dbReference>
<dbReference type="SABIO-RK" id="P28903"/>
<dbReference type="PRO" id="PR:P28903"/>
<dbReference type="Proteomes" id="UP000000625">
    <property type="component" value="Chromosome"/>
</dbReference>
<dbReference type="GO" id="GO:0031250">
    <property type="term" value="C:anaerobic ribonucleoside-triphosphate reductase complex"/>
    <property type="evidence" value="ECO:0000314"/>
    <property type="project" value="EcoCyc"/>
</dbReference>
<dbReference type="GO" id="GO:0005524">
    <property type="term" value="F:ATP binding"/>
    <property type="evidence" value="ECO:0000314"/>
    <property type="project" value="EcoCyc"/>
</dbReference>
<dbReference type="GO" id="GO:0032564">
    <property type="term" value="F:dATP binding"/>
    <property type="evidence" value="ECO:0000314"/>
    <property type="project" value="EcoCyc"/>
</dbReference>
<dbReference type="GO" id="GO:0032567">
    <property type="term" value="F:dGTP binding"/>
    <property type="evidence" value="ECO:0000314"/>
    <property type="project" value="EcoCyc"/>
</dbReference>
<dbReference type="GO" id="GO:0032556">
    <property type="term" value="F:pyrimidine deoxyribonucleotide binding"/>
    <property type="evidence" value="ECO:0000314"/>
    <property type="project" value="EcoCyc"/>
</dbReference>
<dbReference type="GO" id="GO:0008998">
    <property type="term" value="F:ribonucleoside-triphosphate reductase (thioredoxin) activity"/>
    <property type="evidence" value="ECO:0000314"/>
    <property type="project" value="EcoCyc"/>
</dbReference>
<dbReference type="GO" id="GO:0008270">
    <property type="term" value="F:zinc ion binding"/>
    <property type="evidence" value="ECO:0000314"/>
    <property type="project" value="EcoCyc"/>
</dbReference>
<dbReference type="GO" id="GO:0009265">
    <property type="term" value="P:2'-deoxyribonucleotide biosynthetic process"/>
    <property type="evidence" value="ECO:0000314"/>
    <property type="project" value="EcoCyc"/>
</dbReference>
<dbReference type="GO" id="GO:0006260">
    <property type="term" value="P:DNA replication"/>
    <property type="evidence" value="ECO:0007669"/>
    <property type="project" value="InterPro"/>
</dbReference>
<dbReference type="GO" id="GO:0015949">
    <property type="term" value="P:nucleobase-containing small molecule interconversion"/>
    <property type="evidence" value="ECO:0000315"/>
    <property type="project" value="ComplexPortal"/>
</dbReference>
<dbReference type="CDD" id="cd01675">
    <property type="entry name" value="RNR_III"/>
    <property type="match status" value="1"/>
</dbReference>
<dbReference type="FunFam" id="3.20.70.20:FF:000006">
    <property type="entry name" value="Anaerobic ribonucleoside-triphosphate reductase NrdD"/>
    <property type="match status" value="1"/>
</dbReference>
<dbReference type="Gene3D" id="3.20.70.20">
    <property type="match status" value="1"/>
</dbReference>
<dbReference type="InterPro" id="IPR005144">
    <property type="entry name" value="ATP-cone_dom"/>
</dbReference>
<dbReference type="InterPro" id="IPR019777">
    <property type="entry name" value="Form_AcTrfase_GR_CS"/>
</dbReference>
<dbReference type="InterPro" id="IPR001150">
    <property type="entry name" value="Gly_radical"/>
</dbReference>
<dbReference type="InterPro" id="IPR012833">
    <property type="entry name" value="NrdD"/>
</dbReference>
<dbReference type="NCBIfam" id="TIGR02487">
    <property type="entry name" value="NrdD"/>
    <property type="match status" value="1"/>
</dbReference>
<dbReference type="NCBIfam" id="NF006732">
    <property type="entry name" value="PRK09263.1"/>
    <property type="match status" value="1"/>
</dbReference>
<dbReference type="PANTHER" id="PTHR21075">
    <property type="entry name" value="ANAEROBIC RIBONUCLEOSIDE-TRIPHOSPHATE REDUCTASE"/>
    <property type="match status" value="1"/>
</dbReference>
<dbReference type="PANTHER" id="PTHR21075:SF0">
    <property type="entry name" value="ANAEROBIC RIBONUCLEOSIDE-TRIPHOSPHATE REDUCTASE"/>
    <property type="match status" value="1"/>
</dbReference>
<dbReference type="Pfam" id="PF03477">
    <property type="entry name" value="ATP-cone"/>
    <property type="match status" value="1"/>
</dbReference>
<dbReference type="Pfam" id="PF13597">
    <property type="entry name" value="NRDD"/>
    <property type="match status" value="1"/>
</dbReference>
<dbReference type="SUPFAM" id="SSF51998">
    <property type="entry name" value="PFL-like glycyl radical enzymes"/>
    <property type="match status" value="1"/>
</dbReference>
<dbReference type="PROSITE" id="PS51161">
    <property type="entry name" value="ATP_CONE"/>
    <property type="match status" value="1"/>
</dbReference>
<dbReference type="PROSITE" id="PS00850">
    <property type="entry name" value="GLY_RADICAL_1"/>
    <property type="match status" value="1"/>
</dbReference>
<dbReference type="PROSITE" id="PS51149">
    <property type="entry name" value="GLY_RADICAL_2"/>
    <property type="match status" value="1"/>
</dbReference>